<sequence>MLNEIFKNAKSHMDKSIESLRRDFSTLRSGKVSVNILDNVRVDYYGTPTPLNQVGSVIAQDATTIIITPWEKPLIKDIEKSIQEANIGVNPNSDSECVKLFFPPMTQEQRKEIAKNARSMGEKAKVAIRNIRQDANNAIKKLEKDKSITEDENKKALEEIQRYTDEFVKKCDEMLKHKEEEVMKV</sequence>
<feature type="chain" id="PRO_0000167470" description="Ribosome-recycling factor">
    <location>
        <begin position="1"/>
        <end position="185"/>
    </location>
</feature>
<evidence type="ECO:0000255" key="1">
    <source>
        <dbReference type="HAMAP-Rule" id="MF_00040"/>
    </source>
</evidence>
<accession>Q7VJ10</accession>
<reference key="1">
    <citation type="journal article" date="2003" name="Proc. Natl. Acad. Sci. U.S.A.">
        <title>The complete genome sequence of the carcinogenic bacterium Helicobacter hepaticus.</title>
        <authorList>
            <person name="Suerbaum S."/>
            <person name="Josenhans C."/>
            <person name="Sterzenbach T."/>
            <person name="Drescher B."/>
            <person name="Brandt P."/>
            <person name="Bell M."/>
            <person name="Droege M."/>
            <person name="Fartmann B."/>
            <person name="Fischer H.-P."/>
            <person name="Ge Z."/>
            <person name="Hoerster A."/>
            <person name="Holland R."/>
            <person name="Klein K."/>
            <person name="Koenig J."/>
            <person name="Macko L."/>
            <person name="Mendz G.L."/>
            <person name="Nyakatura G."/>
            <person name="Schauer D.B."/>
            <person name="Shen Z."/>
            <person name="Weber J."/>
            <person name="Frosch M."/>
            <person name="Fox J.G."/>
        </authorList>
    </citation>
    <scope>NUCLEOTIDE SEQUENCE [LARGE SCALE GENOMIC DNA]</scope>
    <source>
        <strain>ATCC 51449 / 3B1</strain>
    </source>
</reference>
<gene>
    <name evidence="1" type="primary">frr</name>
    <name type="ordered locus">HH_0441</name>
</gene>
<dbReference type="EMBL" id="AE017125">
    <property type="protein sequence ID" value="AAP77038.1"/>
    <property type="molecule type" value="Genomic_DNA"/>
</dbReference>
<dbReference type="RefSeq" id="WP_011115283.1">
    <property type="nucleotide sequence ID" value="NC_004917.1"/>
</dbReference>
<dbReference type="SMR" id="Q7VJ10"/>
<dbReference type="STRING" id="235279.HH_0441"/>
<dbReference type="KEGG" id="hhe:HH_0441"/>
<dbReference type="eggNOG" id="COG0233">
    <property type="taxonomic scope" value="Bacteria"/>
</dbReference>
<dbReference type="HOGENOM" id="CLU_073981_2_0_7"/>
<dbReference type="OrthoDB" id="9804006at2"/>
<dbReference type="Proteomes" id="UP000002495">
    <property type="component" value="Chromosome"/>
</dbReference>
<dbReference type="GO" id="GO:0005829">
    <property type="term" value="C:cytosol"/>
    <property type="evidence" value="ECO:0007669"/>
    <property type="project" value="GOC"/>
</dbReference>
<dbReference type="GO" id="GO:0043023">
    <property type="term" value="F:ribosomal large subunit binding"/>
    <property type="evidence" value="ECO:0007669"/>
    <property type="project" value="TreeGrafter"/>
</dbReference>
<dbReference type="GO" id="GO:0002184">
    <property type="term" value="P:cytoplasmic translational termination"/>
    <property type="evidence" value="ECO:0007669"/>
    <property type="project" value="TreeGrafter"/>
</dbReference>
<dbReference type="CDD" id="cd00520">
    <property type="entry name" value="RRF"/>
    <property type="match status" value="1"/>
</dbReference>
<dbReference type="FunFam" id="1.10.132.20:FF:000001">
    <property type="entry name" value="Ribosome-recycling factor"/>
    <property type="match status" value="1"/>
</dbReference>
<dbReference type="FunFam" id="3.30.1360.40:FF:000001">
    <property type="entry name" value="Ribosome-recycling factor"/>
    <property type="match status" value="1"/>
</dbReference>
<dbReference type="Gene3D" id="3.30.1360.40">
    <property type="match status" value="1"/>
</dbReference>
<dbReference type="Gene3D" id="1.10.132.20">
    <property type="entry name" value="Ribosome-recycling factor"/>
    <property type="match status" value="1"/>
</dbReference>
<dbReference type="HAMAP" id="MF_00040">
    <property type="entry name" value="RRF"/>
    <property type="match status" value="1"/>
</dbReference>
<dbReference type="InterPro" id="IPR002661">
    <property type="entry name" value="Ribosome_recyc_fac"/>
</dbReference>
<dbReference type="InterPro" id="IPR023584">
    <property type="entry name" value="Ribosome_recyc_fac_dom"/>
</dbReference>
<dbReference type="InterPro" id="IPR036191">
    <property type="entry name" value="RRF_sf"/>
</dbReference>
<dbReference type="NCBIfam" id="TIGR00496">
    <property type="entry name" value="frr"/>
    <property type="match status" value="1"/>
</dbReference>
<dbReference type="PANTHER" id="PTHR20982:SF3">
    <property type="entry name" value="MITOCHONDRIAL RIBOSOME RECYCLING FACTOR PSEUDO 1"/>
    <property type="match status" value="1"/>
</dbReference>
<dbReference type="PANTHER" id="PTHR20982">
    <property type="entry name" value="RIBOSOME RECYCLING FACTOR"/>
    <property type="match status" value="1"/>
</dbReference>
<dbReference type="Pfam" id="PF01765">
    <property type="entry name" value="RRF"/>
    <property type="match status" value="1"/>
</dbReference>
<dbReference type="SUPFAM" id="SSF55194">
    <property type="entry name" value="Ribosome recycling factor, RRF"/>
    <property type="match status" value="1"/>
</dbReference>
<keyword id="KW-0963">Cytoplasm</keyword>
<keyword id="KW-0648">Protein biosynthesis</keyword>
<keyword id="KW-1185">Reference proteome</keyword>
<organism>
    <name type="scientific">Helicobacter hepaticus (strain ATCC 51449 / 3B1)</name>
    <dbReference type="NCBI Taxonomy" id="235279"/>
    <lineage>
        <taxon>Bacteria</taxon>
        <taxon>Pseudomonadati</taxon>
        <taxon>Campylobacterota</taxon>
        <taxon>Epsilonproteobacteria</taxon>
        <taxon>Campylobacterales</taxon>
        <taxon>Helicobacteraceae</taxon>
        <taxon>Helicobacter</taxon>
    </lineage>
</organism>
<protein>
    <recommendedName>
        <fullName evidence="1">Ribosome-recycling factor</fullName>
        <shortName evidence="1">RRF</shortName>
    </recommendedName>
    <alternativeName>
        <fullName evidence="1">Ribosome-releasing factor</fullName>
    </alternativeName>
</protein>
<proteinExistence type="inferred from homology"/>
<comment type="function">
    <text evidence="1">Responsible for the release of ribosomes from messenger RNA at the termination of protein biosynthesis. May increase the efficiency of translation by recycling ribosomes from one round of translation to another.</text>
</comment>
<comment type="subcellular location">
    <subcellularLocation>
        <location evidence="1">Cytoplasm</location>
    </subcellularLocation>
</comment>
<comment type="similarity">
    <text evidence="1">Belongs to the RRF family.</text>
</comment>
<name>RRF_HELHP</name>